<name>GDF10_BOVIN</name>
<feature type="signal peptide" evidence="4">
    <location>
        <begin position="1"/>
        <end position="33"/>
    </location>
</feature>
<feature type="propeptide" id="PRO_0000285571" evidence="4">
    <location>
        <begin position="34"/>
        <end position="368"/>
    </location>
</feature>
<feature type="chain" id="PRO_0000285572" description="Growth/differentiation factor 10">
    <location>
        <begin position="369"/>
        <end position="478"/>
    </location>
</feature>
<feature type="region of interest" description="Disordered" evidence="5">
    <location>
        <begin position="34"/>
        <end position="70"/>
    </location>
</feature>
<feature type="region of interest" description="Disordered" evidence="5">
    <location>
        <begin position="267"/>
        <end position="345"/>
    </location>
</feature>
<feature type="compositionally biased region" description="Polar residues" evidence="5">
    <location>
        <begin position="291"/>
        <end position="301"/>
    </location>
</feature>
<feature type="compositionally biased region" description="Basic residues" evidence="5">
    <location>
        <begin position="331"/>
        <end position="343"/>
    </location>
</feature>
<feature type="glycosylation site" description="N-linked (GlcNAc...) asparagine" evidence="4">
    <location>
        <position position="118"/>
    </location>
</feature>
<feature type="glycosylation site" description="N-linked (GlcNAc...) asparagine" evidence="4">
    <location>
        <position position="155"/>
    </location>
</feature>
<feature type="glycosylation site" description="N-linked (GlcNAc...) asparagine" evidence="4">
    <location>
        <position position="280"/>
    </location>
</feature>
<feature type="glycosylation site" description="N-linked (GlcNAc...) asparagine" evidence="4">
    <location>
        <position position="469"/>
    </location>
</feature>
<feature type="disulfide bond" evidence="1">
    <location>
        <begin position="376"/>
        <end position="443"/>
    </location>
</feature>
<feature type="disulfide bond" evidence="1">
    <location>
        <begin position="405"/>
        <end position="475"/>
    </location>
</feature>
<feature type="disulfide bond" evidence="1">
    <location>
        <begin position="409"/>
        <end position="477"/>
    </location>
</feature>
<feature type="disulfide bond" description="Interchain" evidence="1">
    <location>
        <position position="442"/>
    </location>
</feature>
<dbReference type="EMBL" id="BC123524">
    <property type="protein sequence ID" value="AAI23525.1"/>
    <property type="molecule type" value="mRNA"/>
</dbReference>
<dbReference type="RefSeq" id="NP_001069635.1">
    <property type="nucleotide sequence ID" value="NM_001076167.2"/>
</dbReference>
<dbReference type="SMR" id="Q08DX6"/>
<dbReference type="FunCoup" id="Q08DX6">
    <property type="interactions" value="75"/>
</dbReference>
<dbReference type="STRING" id="9913.ENSBTAP00000001351"/>
<dbReference type="GlyCosmos" id="Q08DX6">
    <property type="glycosylation" value="4 sites, No reported glycans"/>
</dbReference>
<dbReference type="GlyGen" id="Q08DX6">
    <property type="glycosylation" value="4 sites"/>
</dbReference>
<dbReference type="PaxDb" id="9913-ENSBTAP00000001351"/>
<dbReference type="Ensembl" id="ENSBTAT00000001351.7">
    <property type="protein sequence ID" value="ENSBTAP00000001351.5"/>
    <property type="gene ID" value="ENSBTAG00000001019.7"/>
</dbReference>
<dbReference type="GeneID" id="539510"/>
<dbReference type="KEGG" id="bta:539510"/>
<dbReference type="CTD" id="2662"/>
<dbReference type="VEuPathDB" id="HostDB:ENSBTAG00000001019"/>
<dbReference type="VGNC" id="VGNC:29299">
    <property type="gene designation" value="GDF10"/>
</dbReference>
<dbReference type="eggNOG" id="KOG3900">
    <property type="taxonomic scope" value="Eukaryota"/>
</dbReference>
<dbReference type="GeneTree" id="ENSGT00940000157214"/>
<dbReference type="HOGENOM" id="CLU_020515_10_0_1"/>
<dbReference type="InParanoid" id="Q08DX6"/>
<dbReference type="OMA" id="VHMLKLY"/>
<dbReference type="OrthoDB" id="5987191at2759"/>
<dbReference type="TreeFam" id="TF316134"/>
<dbReference type="Proteomes" id="UP000009136">
    <property type="component" value="Chromosome 28"/>
</dbReference>
<dbReference type="Bgee" id="ENSBTAG00000001019">
    <property type="expression patterns" value="Expressed in myometrium and 63 other cell types or tissues"/>
</dbReference>
<dbReference type="GO" id="GO:0005615">
    <property type="term" value="C:extracellular space"/>
    <property type="evidence" value="ECO:0000318"/>
    <property type="project" value="GO_Central"/>
</dbReference>
<dbReference type="GO" id="GO:0005125">
    <property type="term" value="F:cytokine activity"/>
    <property type="evidence" value="ECO:0000318"/>
    <property type="project" value="GO_Central"/>
</dbReference>
<dbReference type="GO" id="GO:0008083">
    <property type="term" value="F:growth factor activity"/>
    <property type="evidence" value="ECO:0007669"/>
    <property type="project" value="UniProtKB-KW"/>
</dbReference>
<dbReference type="GO" id="GO:0045444">
    <property type="term" value="P:fat cell differentiation"/>
    <property type="evidence" value="ECO:0007669"/>
    <property type="project" value="Ensembl"/>
</dbReference>
<dbReference type="GO" id="GO:0030279">
    <property type="term" value="P:negative regulation of ossification"/>
    <property type="evidence" value="ECO:0007669"/>
    <property type="project" value="Ensembl"/>
</dbReference>
<dbReference type="GO" id="GO:0001649">
    <property type="term" value="P:osteoblast differentiation"/>
    <property type="evidence" value="ECO:0007669"/>
    <property type="project" value="InterPro"/>
</dbReference>
<dbReference type="GO" id="GO:0045669">
    <property type="term" value="P:positive regulation of osteoblast differentiation"/>
    <property type="evidence" value="ECO:0000318"/>
    <property type="project" value="GO_Central"/>
</dbReference>
<dbReference type="CDD" id="cd19394">
    <property type="entry name" value="TGF_beta_GDF10"/>
    <property type="match status" value="1"/>
</dbReference>
<dbReference type="FunFam" id="2.10.90.10:FF:000008">
    <property type="entry name" value="Bone morphogenetic protein 3"/>
    <property type="match status" value="1"/>
</dbReference>
<dbReference type="Gene3D" id="2.10.90.10">
    <property type="entry name" value="Cystine-knot cytokines"/>
    <property type="match status" value="1"/>
</dbReference>
<dbReference type="InterPro" id="IPR017197">
    <property type="entry name" value="BMP3/BMP3B"/>
</dbReference>
<dbReference type="InterPro" id="IPR029034">
    <property type="entry name" value="Cystine-knot_cytokine"/>
</dbReference>
<dbReference type="InterPro" id="IPR001839">
    <property type="entry name" value="TGF-b_C"/>
</dbReference>
<dbReference type="InterPro" id="IPR015615">
    <property type="entry name" value="TGF-beta-rel"/>
</dbReference>
<dbReference type="InterPro" id="IPR017948">
    <property type="entry name" value="TGFb_CS"/>
</dbReference>
<dbReference type="PANTHER" id="PTHR11848:SF145">
    <property type="entry name" value="GROWTH_DIFFERENTIATION FACTOR 10"/>
    <property type="match status" value="1"/>
</dbReference>
<dbReference type="PANTHER" id="PTHR11848">
    <property type="entry name" value="TGF-BETA FAMILY"/>
    <property type="match status" value="1"/>
</dbReference>
<dbReference type="Pfam" id="PF00019">
    <property type="entry name" value="TGF_beta"/>
    <property type="match status" value="1"/>
</dbReference>
<dbReference type="PIRSF" id="PIRSF037403">
    <property type="entry name" value="BMP3/GDF10"/>
    <property type="match status" value="1"/>
</dbReference>
<dbReference type="PRINTS" id="PR00669">
    <property type="entry name" value="INHIBINA"/>
</dbReference>
<dbReference type="SMART" id="SM00204">
    <property type="entry name" value="TGFB"/>
    <property type="match status" value="1"/>
</dbReference>
<dbReference type="SUPFAM" id="SSF57501">
    <property type="entry name" value="Cystine-knot cytokines"/>
    <property type="match status" value="1"/>
</dbReference>
<dbReference type="PROSITE" id="PS00250">
    <property type="entry name" value="TGF_BETA_1"/>
    <property type="match status" value="1"/>
</dbReference>
<dbReference type="PROSITE" id="PS51362">
    <property type="entry name" value="TGF_BETA_2"/>
    <property type="match status" value="1"/>
</dbReference>
<gene>
    <name type="primary">GDF10</name>
    <name type="synonym">BMP3B</name>
</gene>
<reference key="1">
    <citation type="submission" date="2006-09" db="EMBL/GenBank/DDBJ databases">
        <authorList>
            <consortium name="NIH - Mammalian Gene Collection (MGC) project"/>
        </authorList>
    </citation>
    <scope>NUCLEOTIDE SEQUENCE [LARGE SCALE MRNA]</scope>
    <source>
        <strain>Hereford</strain>
        <tissue>Fetal cerebellum</tissue>
    </source>
</reference>
<comment type="function">
    <text evidence="2 3">Growth factor involved in osteogenesis and adipogenesis. Plays an inhibitory role in the process of osteoblast differentiation via SMAD2/3 pathway. Plays an inhibitory role in the process of adipogenesis.</text>
</comment>
<comment type="subunit">
    <text evidence="2">Homodimer or heterodimer. Can form a non-covalent complex of the mature region and the pro-region.</text>
</comment>
<comment type="subcellular location">
    <subcellularLocation>
        <location evidence="2">Secreted</location>
    </subcellularLocation>
</comment>
<comment type="similarity">
    <text evidence="6">Belongs to the TGF-beta family.</text>
</comment>
<keyword id="KW-0165">Cleavage on pair of basic residues</keyword>
<keyword id="KW-0202">Cytokine</keyword>
<keyword id="KW-1015">Disulfide bond</keyword>
<keyword id="KW-0325">Glycoprotein</keyword>
<keyword id="KW-0339">Growth factor</keyword>
<keyword id="KW-0892">Osteogenesis</keyword>
<keyword id="KW-1185">Reference proteome</keyword>
<keyword id="KW-0964">Secreted</keyword>
<keyword id="KW-0732">Signal</keyword>
<accession>Q08DX6</accession>
<organism>
    <name type="scientific">Bos taurus</name>
    <name type="common">Bovine</name>
    <dbReference type="NCBI Taxonomy" id="9913"/>
    <lineage>
        <taxon>Eukaryota</taxon>
        <taxon>Metazoa</taxon>
        <taxon>Chordata</taxon>
        <taxon>Craniata</taxon>
        <taxon>Vertebrata</taxon>
        <taxon>Euteleostomi</taxon>
        <taxon>Mammalia</taxon>
        <taxon>Eutheria</taxon>
        <taxon>Laurasiatheria</taxon>
        <taxon>Artiodactyla</taxon>
        <taxon>Ruminantia</taxon>
        <taxon>Pecora</taxon>
        <taxon>Bovidae</taxon>
        <taxon>Bovinae</taxon>
        <taxon>Bos</taxon>
    </lineage>
</organism>
<protein>
    <recommendedName>
        <fullName>Growth/differentiation factor 10</fullName>
        <shortName>GDF-10</shortName>
    </recommendedName>
    <alternativeName>
        <fullName>Bone morphogenetic protein 3B</fullName>
        <shortName>BMP-3B</shortName>
    </alternativeName>
</protein>
<evidence type="ECO:0000250" key="1"/>
<evidence type="ECO:0000250" key="2">
    <source>
        <dbReference type="UniProtKB" id="P97737"/>
    </source>
</evidence>
<evidence type="ECO:0000250" key="3">
    <source>
        <dbReference type="UniProtKB" id="Q7T2X6"/>
    </source>
</evidence>
<evidence type="ECO:0000255" key="4"/>
<evidence type="ECO:0000256" key="5">
    <source>
        <dbReference type="SAM" id="MobiDB-lite"/>
    </source>
</evidence>
<evidence type="ECO:0000305" key="6"/>
<sequence>MARGPARTSLGPGSQQLPLLSLLLLLLLRDADGSHTAAARPPPPAAADGLAGDKNPQRSPGDVAAAQSPGAQDMVAVHMLRLYEKYSRRGARPGGGNTVRSFRARLEVVNQKAVYFFNLTSMQDSEMILTATFHFYSEPQWPPAREVPCKQRAKNASCRLLPPGPPARQHLLFRSLSQNTATQGLLRGAMALPPPPRGLWQAKDISLIVKAARRDGELLLSAQLDSGEKDTGVPRLGPHAPYILIYANDLAISEPNSVAVTLQRYDPFQAGDPEPGAAPNSSADPRVRRATQATGPLQNNELPGLDERPAQAPHAQHYHKHELWPNPLRALKPRPGRKDRRKKGQDVFMASSQVLDFDEKTMQKARKKQWDEPRVCSRRYLKVDFADIGWNEWIISPKSFDAYYCSGACEFPMPKMVRPSNHATIQSIVRAVGIVPGIPEPCCVPDKMSSLGVLFLDENRNVVLKVYPNMSVETCACR</sequence>
<proteinExistence type="evidence at transcript level"/>